<accession>Q8U4A0</accession>
<sequence length="414" mass="46985">MEVVLEGKFLLDKRTIEGYIGIEDGKISKISLREIKGDHKIKVDKGKVILPGLIDVHVHLRDFEESYKESIESGTKAAVHGGITVVFDMPNTKPPIMDEKTLKLREHLFKRKSYADYALGFLLAGNKPVEADFYKIFMGASTGGIYSKNFEEDYIRALDIVSIHAEDYEIIQKYPERPPIAEIRAIERVIEAVKTHKKPAHICHISTAKGLKLLLDSRLEMLSFEVTPHHLFLTRSDYDKNPLLKVYPPLRSEEDRIALWKNIDKVPVIASDHAPHTLEDKEAGAAGLPGLETEVPLLLDAVNKGLITLQDIVEKMHINPIKIFGIENKGFEKGKDADFTIVDMKREWTIRADNLYTKAGWTPYEGWRVKGKVIMTIIRGEVVMEEDEIIGKPRGERIVKKGKHRRNLGSSEEH</sequence>
<keyword id="KW-0378">Hydrolase</keyword>
<keyword id="KW-0479">Metal-binding</keyword>
<keyword id="KW-0665">Pyrimidine biosynthesis</keyword>
<keyword id="KW-1185">Reference proteome</keyword>
<keyword id="KW-0862">Zinc</keyword>
<gene>
    <name evidence="1" type="primary">pyrC</name>
    <name type="ordered locus">PF0189</name>
</gene>
<name>PYRC_PYRFU</name>
<comment type="function">
    <text evidence="1">Catalyzes the reversible cyclization of carbamoyl aspartate to dihydroorotate.</text>
</comment>
<comment type="catalytic activity">
    <reaction evidence="1">
        <text>(S)-dihydroorotate + H2O = N-carbamoyl-L-aspartate + H(+)</text>
        <dbReference type="Rhea" id="RHEA:24296"/>
        <dbReference type="ChEBI" id="CHEBI:15377"/>
        <dbReference type="ChEBI" id="CHEBI:15378"/>
        <dbReference type="ChEBI" id="CHEBI:30864"/>
        <dbReference type="ChEBI" id="CHEBI:32814"/>
        <dbReference type="EC" id="3.5.2.3"/>
    </reaction>
</comment>
<comment type="cofactor">
    <cofactor evidence="1">
        <name>Zn(2+)</name>
        <dbReference type="ChEBI" id="CHEBI:29105"/>
    </cofactor>
    <text evidence="1">Binds 2 Zn(2+) ions per subunit.</text>
</comment>
<comment type="pathway">
    <text evidence="1">Pyrimidine metabolism; UMP biosynthesis via de novo pathway; (S)-dihydroorotate from bicarbonate: step 3/3.</text>
</comment>
<comment type="similarity">
    <text evidence="1">Belongs to the metallo-dependent hydrolases superfamily. DHOase family. Class I DHOase subfamily.</text>
</comment>
<comment type="sequence caution" evidence="2">
    <conflict type="erroneous initiation">
        <sequence resource="EMBL-CDS" id="AAL80313"/>
    </conflict>
</comment>
<evidence type="ECO:0000255" key="1">
    <source>
        <dbReference type="HAMAP-Rule" id="MF_00220"/>
    </source>
</evidence>
<evidence type="ECO:0000305" key="2"/>
<protein>
    <recommendedName>
        <fullName evidence="1">Dihydroorotase</fullName>
        <shortName evidence="1">DHOase</shortName>
        <ecNumber evidence="1">3.5.2.3</ecNumber>
    </recommendedName>
</protein>
<proteinExistence type="inferred from homology"/>
<feature type="chain" id="PRO_0000147276" description="Dihydroorotase">
    <location>
        <begin position="1"/>
        <end position="414"/>
    </location>
</feature>
<feature type="active site" evidence="1">
    <location>
        <position position="272"/>
    </location>
</feature>
<feature type="binding site" evidence="1">
    <location>
        <position position="57"/>
    </location>
    <ligand>
        <name>Zn(2+)</name>
        <dbReference type="ChEBI" id="CHEBI:29105"/>
        <label>1</label>
    </ligand>
</feature>
<feature type="binding site" evidence="1">
    <location>
        <begin position="59"/>
        <end position="61"/>
    </location>
    <ligand>
        <name>substrate</name>
    </ligand>
</feature>
<feature type="binding site" evidence="1">
    <location>
        <position position="59"/>
    </location>
    <ligand>
        <name>Zn(2+)</name>
        <dbReference type="ChEBI" id="CHEBI:29105"/>
        <label>1</label>
    </ligand>
</feature>
<feature type="binding site" evidence="1">
    <location>
        <position position="91"/>
    </location>
    <ligand>
        <name>substrate</name>
    </ligand>
</feature>
<feature type="binding site" evidence="1">
    <location>
        <position position="135"/>
    </location>
    <ligand>
        <name>Zn(2+)</name>
        <dbReference type="ChEBI" id="CHEBI:29105"/>
        <label>1</label>
    </ligand>
</feature>
<feature type="binding site" evidence="1">
    <location>
        <position position="135"/>
    </location>
    <ligand>
        <name>Zn(2+)</name>
        <dbReference type="ChEBI" id="CHEBI:29105"/>
        <label>2</label>
    </ligand>
</feature>
<feature type="binding site" evidence="1">
    <location>
        <position position="164"/>
    </location>
    <ligand>
        <name>Zn(2+)</name>
        <dbReference type="ChEBI" id="CHEBI:29105"/>
        <label>2</label>
    </ligand>
</feature>
<feature type="binding site" evidence="1">
    <location>
        <position position="204"/>
    </location>
    <ligand>
        <name>Zn(2+)</name>
        <dbReference type="ChEBI" id="CHEBI:29105"/>
        <label>2</label>
    </ligand>
</feature>
<feature type="binding site" evidence="1">
    <location>
        <position position="272"/>
    </location>
    <ligand>
        <name>Zn(2+)</name>
        <dbReference type="ChEBI" id="CHEBI:29105"/>
        <label>1</label>
    </ligand>
</feature>
<feature type="binding site" evidence="1">
    <location>
        <position position="276"/>
    </location>
    <ligand>
        <name>substrate</name>
    </ligand>
</feature>
<feature type="binding site" evidence="1">
    <location>
        <begin position="286"/>
        <end position="287"/>
    </location>
    <ligand>
        <name>substrate</name>
    </ligand>
</feature>
<feature type="modified residue" description="N6-carboxylysine" evidence="1">
    <location>
        <position position="135"/>
    </location>
</feature>
<organism>
    <name type="scientific">Pyrococcus furiosus (strain ATCC 43587 / DSM 3638 / JCM 8422 / Vc1)</name>
    <dbReference type="NCBI Taxonomy" id="186497"/>
    <lineage>
        <taxon>Archaea</taxon>
        <taxon>Methanobacteriati</taxon>
        <taxon>Methanobacteriota</taxon>
        <taxon>Thermococci</taxon>
        <taxon>Thermococcales</taxon>
        <taxon>Thermococcaceae</taxon>
        <taxon>Pyrococcus</taxon>
    </lineage>
</organism>
<reference key="1">
    <citation type="journal article" date="1999" name="Genetics">
        <title>Divergence of the hyperthermophilic archaea Pyrococcus furiosus and P. horikoshii inferred from complete genomic sequences.</title>
        <authorList>
            <person name="Maeder D.L."/>
            <person name="Weiss R.B."/>
            <person name="Dunn D.M."/>
            <person name="Cherry J.L."/>
            <person name="Gonzalez J.M."/>
            <person name="DiRuggiero J."/>
            <person name="Robb F.T."/>
        </authorList>
    </citation>
    <scope>NUCLEOTIDE SEQUENCE [LARGE SCALE GENOMIC DNA]</scope>
    <source>
        <strain>ATCC 43587 / DSM 3638 / JCM 8422 / Vc1</strain>
    </source>
</reference>
<dbReference type="EC" id="3.5.2.3" evidence="1"/>
<dbReference type="EMBL" id="AE009950">
    <property type="protein sequence ID" value="AAL80313.1"/>
    <property type="status" value="ALT_INIT"/>
    <property type="molecule type" value="Genomic_DNA"/>
</dbReference>
<dbReference type="RefSeq" id="WP_014835451.1">
    <property type="nucleotide sequence ID" value="NZ_CP023154.1"/>
</dbReference>
<dbReference type="SMR" id="Q8U4A0"/>
<dbReference type="STRING" id="186497.PF0189"/>
<dbReference type="PaxDb" id="186497-PF0189"/>
<dbReference type="KEGG" id="pfu:PF0189"/>
<dbReference type="PATRIC" id="fig|186497.12.peg.196"/>
<dbReference type="eggNOG" id="arCOG00689">
    <property type="taxonomic scope" value="Archaea"/>
</dbReference>
<dbReference type="HOGENOM" id="CLU_015572_1_1_2"/>
<dbReference type="OrthoDB" id="50279at2157"/>
<dbReference type="PhylomeDB" id="Q8U4A0"/>
<dbReference type="UniPathway" id="UPA00070">
    <property type="reaction ID" value="UER00117"/>
</dbReference>
<dbReference type="Proteomes" id="UP000001013">
    <property type="component" value="Chromosome"/>
</dbReference>
<dbReference type="GO" id="GO:0005737">
    <property type="term" value="C:cytoplasm"/>
    <property type="evidence" value="ECO:0007669"/>
    <property type="project" value="TreeGrafter"/>
</dbReference>
<dbReference type="GO" id="GO:0004038">
    <property type="term" value="F:allantoinase activity"/>
    <property type="evidence" value="ECO:0007669"/>
    <property type="project" value="TreeGrafter"/>
</dbReference>
<dbReference type="GO" id="GO:0004151">
    <property type="term" value="F:dihydroorotase activity"/>
    <property type="evidence" value="ECO:0007669"/>
    <property type="project" value="UniProtKB-UniRule"/>
</dbReference>
<dbReference type="GO" id="GO:0008270">
    <property type="term" value="F:zinc ion binding"/>
    <property type="evidence" value="ECO:0007669"/>
    <property type="project" value="UniProtKB-UniRule"/>
</dbReference>
<dbReference type="GO" id="GO:0044205">
    <property type="term" value="P:'de novo' UMP biosynthetic process"/>
    <property type="evidence" value="ECO:0007669"/>
    <property type="project" value="UniProtKB-UniRule"/>
</dbReference>
<dbReference type="GO" id="GO:0006145">
    <property type="term" value="P:purine nucleobase catabolic process"/>
    <property type="evidence" value="ECO:0007669"/>
    <property type="project" value="TreeGrafter"/>
</dbReference>
<dbReference type="CDD" id="cd01318">
    <property type="entry name" value="DHOase_IIb"/>
    <property type="match status" value="1"/>
</dbReference>
<dbReference type="Gene3D" id="3.20.20.140">
    <property type="entry name" value="Metal-dependent hydrolases"/>
    <property type="match status" value="1"/>
</dbReference>
<dbReference type="HAMAP" id="MF_00220_A">
    <property type="entry name" value="PyrC_classI_A"/>
    <property type="match status" value="1"/>
</dbReference>
<dbReference type="InterPro" id="IPR006680">
    <property type="entry name" value="Amidohydro-rel"/>
</dbReference>
<dbReference type="InterPro" id="IPR004722">
    <property type="entry name" value="DHOase"/>
</dbReference>
<dbReference type="InterPro" id="IPR050138">
    <property type="entry name" value="DHOase/Allantoinase_Hydrolase"/>
</dbReference>
<dbReference type="InterPro" id="IPR002195">
    <property type="entry name" value="Dihydroorotase_CS"/>
</dbReference>
<dbReference type="InterPro" id="IPR011059">
    <property type="entry name" value="Metal-dep_hydrolase_composite"/>
</dbReference>
<dbReference type="InterPro" id="IPR032466">
    <property type="entry name" value="Metal_Hydrolase"/>
</dbReference>
<dbReference type="NCBIfam" id="NF003271">
    <property type="entry name" value="PRK04250.1"/>
    <property type="match status" value="1"/>
</dbReference>
<dbReference type="NCBIfam" id="TIGR00857">
    <property type="entry name" value="pyrC_multi"/>
    <property type="match status" value="1"/>
</dbReference>
<dbReference type="PANTHER" id="PTHR43668">
    <property type="entry name" value="ALLANTOINASE"/>
    <property type="match status" value="1"/>
</dbReference>
<dbReference type="PANTHER" id="PTHR43668:SF2">
    <property type="entry name" value="ALLANTOINASE"/>
    <property type="match status" value="1"/>
</dbReference>
<dbReference type="Pfam" id="PF01979">
    <property type="entry name" value="Amidohydro_1"/>
    <property type="match status" value="1"/>
</dbReference>
<dbReference type="SUPFAM" id="SSF51338">
    <property type="entry name" value="Composite domain of metallo-dependent hydrolases"/>
    <property type="match status" value="2"/>
</dbReference>
<dbReference type="SUPFAM" id="SSF51556">
    <property type="entry name" value="Metallo-dependent hydrolases"/>
    <property type="match status" value="1"/>
</dbReference>
<dbReference type="PROSITE" id="PS00482">
    <property type="entry name" value="DIHYDROOROTASE_1"/>
    <property type="match status" value="1"/>
</dbReference>
<dbReference type="PROSITE" id="PS00483">
    <property type="entry name" value="DIHYDROOROTASE_2"/>
    <property type="match status" value="1"/>
</dbReference>